<accession>Q161T1</accession>
<sequence length="101" mass="11012">MIPGEIMPKEGDITLNEGAEAITLMVANTGDRPVQVGSHYHFAEANAALEFDRDAARGMRLDITAGTAVRFEPGQRRDVQLIPISGARRIFGFNQQVMGDL</sequence>
<reference key="1">
    <citation type="journal article" date="2007" name="J. Bacteriol.">
        <title>The complete genome sequence of Roseobacter denitrificans reveals a mixotrophic rather than photosynthetic metabolism.</title>
        <authorList>
            <person name="Swingley W.D."/>
            <person name="Sadekar S."/>
            <person name="Mastrian S.D."/>
            <person name="Matthies H.J."/>
            <person name="Hao J."/>
            <person name="Ramos H."/>
            <person name="Acharya C.R."/>
            <person name="Conrad A.L."/>
            <person name="Taylor H.L."/>
            <person name="Dejesa L.C."/>
            <person name="Shah M.K."/>
            <person name="O'Huallachain M.E."/>
            <person name="Lince M.T."/>
            <person name="Blankenship R.E."/>
            <person name="Beatty J.T."/>
            <person name="Touchman J.W."/>
        </authorList>
    </citation>
    <scope>NUCLEOTIDE SEQUENCE [LARGE SCALE GENOMIC DNA]</scope>
    <source>
        <strain>ATCC 33942 / OCh 114</strain>
    </source>
</reference>
<name>URE2_ROSDO</name>
<protein>
    <recommendedName>
        <fullName evidence="1">Urease subunit beta</fullName>
        <ecNumber evidence="1">3.5.1.5</ecNumber>
    </recommendedName>
    <alternativeName>
        <fullName evidence="1">Urea amidohydrolase subunit beta</fullName>
    </alternativeName>
</protein>
<dbReference type="EC" id="3.5.1.5" evidence="1"/>
<dbReference type="EMBL" id="CP000362">
    <property type="protein sequence ID" value="ABG33262.1"/>
    <property type="molecule type" value="Genomic_DNA"/>
</dbReference>
<dbReference type="RefSeq" id="WP_011569873.1">
    <property type="nucleotide sequence ID" value="NC_008209.1"/>
</dbReference>
<dbReference type="SMR" id="Q161T1"/>
<dbReference type="STRING" id="375451.RD1_3795"/>
<dbReference type="KEGG" id="rde:RD1_3795"/>
<dbReference type="eggNOG" id="COG0832">
    <property type="taxonomic scope" value="Bacteria"/>
</dbReference>
<dbReference type="HOGENOM" id="CLU_129707_1_1_5"/>
<dbReference type="OrthoDB" id="9797217at2"/>
<dbReference type="UniPathway" id="UPA00258">
    <property type="reaction ID" value="UER00370"/>
</dbReference>
<dbReference type="Proteomes" id="UP000007029">
    <property type="component" value="Chromosome"/>
</dbReference>
<dbReference type="GO" id="GO:0035550">
    <property type="term" value="C:urease complex"/>
    <property type="evidence" value="ECO:0007669"/>
    <property type="project" value="InterPro"/>
</dbReference>
<dbReference type="GO" id="GO:0009039">
    <property type="term" value="F:urease activity"/>
    <property type="evidence" value="ECO:0007669"/>
    <property type="project" value="UniProtKB-UniRule"/>
</dbReference>
<dbReference type="GO" id="GO:0043419">
    <property type="term" value="P:urea catabolic process"/>
    <property type="evidence" value="ECO:0007669"/>
    <property type="project" value="UniProtKB-UniRule"/>
</dbReference>
<dbReference type="CDD" id="cd00407">
    <property type="entry name" value="Urease_beta"/>
    <property type="match status" value="1"/>
</dbReference>
<dbReference type="FunFam" id="2.10.150.10:FF:000001">
    <property type="entry name" value="Urease subunit beta"/>
    <property type="match status" value="1"/>
</dbReference>
<dbReference type="Gene3D" id="2.10.150.10">
    <property type="entry name" value="Urease, beta subunit"/>
    <property type="match status" value="1"/>
</dbReference>
<dbReference type="HAMAP" id="MF_01954">
    <property type="entry name" value="Urease_beta"/>
    <property type="match status" value="1"/>
</dbReference>
<dbReference type="InterPro" id="IPR002019">
    <property type="entry name" value="Urease_beta-like"/>
</dbReference>
<dbReference type="InterPro" id="IPR036461">
    <property type="entry name" value="Urease_betasu_sf"/>
</dbReference>
<dbReference type="InterPro" id="IPR050069">
    <property type="entry name" value="Urease_subunit"/>
</dbReference>
<dbReference type="NCBIfam" id="NF009682">
    <property type="entry name" value="PRK13203.1"/>
    <property type="match status" value="1"/>
</dbReference>
<dbReference type="NCBIfam" id="TIGR00192">
    <property type="entry name" value="urease_beta"/>
    <property type="match status" value="1"/>
</dbReference>
<dbReference type="PANTHER" id="PTHR33569">
    <property type="entry name" value="UREASE"/>
    <property type="match status" value="1"/>
</dbReference>
<dbReference type="PANTHER" id="PTHR33569:SF1">
    <property type="entry name" value="UREASE"/>
    <property type="match status" value="1"/>
</dbReference>
<dbReference type="Pfam" id="PF00699">
    <property type="entry name" value="Urease_beta"/>
    <property type="match status" value="1"/>
</dbReference>
<dbReference type="SUPFAM" id="SSF51278">
    <property type="entry name" value="Urease, beta-subunit"/>
    <property type="match status" value="1"/>
</dbReference>
<comment type="catalytic activity">
    <reaction evidence="1">
        <text>urea + 2 H2O + H(+) = hydrogencarbonate + 2 NH4(+)</text>
        <dbReference type="Rhea" id="RHEA:20557"/>
        <dbReference type="ChEBI" id="CHEBI:15377"/>
        <dbReference type="ChEBI" id="CHEBI:15378"/>
        <dbReference type="ChEBI" id="CHEBI:16199"/>
        <dbReference type="ChEBI" id="CHEBI:17544"/>
        <dbReference type="ChEBI" id="CHEBI:28938"/>
        <dbReference type="EC" id="3.5.1.5"/>
    </reaction>
</comment>
<comment type="pathway">
    <text evidence="1">Nitrogen metabolism; urea degradation; CO(2) and NH(3) from urea (urease route): step 1/1.</text>
</comment>
<comment type="subunit">
    <text evidence="1">Heterotrimer of UreA (gamma), UreB (beta) and UreC (alpha) subunits. Three heterotrimers associate to form the active enzyme.</text>
</comment>
<comment type="subcellular location">
    <subcellularLocation>
        <location evidence="1">Cytoplasm</location>
    </subcellularLocation>
</comment>
<comment type="similarity">
    <text evidence="1">Belongs to the urease beta subunit family.</text>
</comment>
<keyword id="KW-0963">Cytoplasm</keyword>
<keyword id="KW-0378">Hydrolase</keyword>
<keyword id="KW-1185">Reference proteome</keyword>
<proteinExistence type="inferred from homology"/>
<evidence type="ECO:0000255" key="1">
    <source>
        <dbReference type="HAMAP-Rule" id="MF_01954"/>
    </source>
</evidence>
<gene>
    <name evidence="1" type="primary">ureB</name>
    <name type="ordered locus">RD1_3795</name>
</gene>
<feature type="chain" id="PRO_1000070772" description="Urease subunit beta">
    <location>
        <begin position="1"/>
        <end position="101"/>
    </location>
</feature>
<organism>
    <name type="scientific">Roseobacter denitrificans (strain ATCC 33942 / OCh 114)</name>
    <name type="common">Erythrobacter sp. (strain OCh 114)</name>
    <name type="synonym">Roseobacter denitrificans</name>
    <dbReference type="NCBI Taxonomy" id="375451"/>
    <lineage>
        <taxon>Bacteria</taxon>
        <taxon>Pseudomonadati</taxon>
        <taxon>Pseudomonadota</taxon>
        <taxon>Alphaproteobacteria</taxon>
        <taxon>Rhodobacterales</taxon>
        <taxon>Roseobacteraceae</taxon>
        <taxon>Roseobacter</taxon>
    </lineage>
</organism>